<proteinExistence type="inferred from homology"/>
<dbReference type="EMBL" id="CP000056">
    <property type="protein sequence ID" value="AAX72566.1"/>
    <property type="molecule type" value="Genomic_DNA"/>
</dbReference>
<dbReference type="SMR" id="Q48RU4"/>
<dbReference type="KEGG" id="spb:M28_Spy1456"/>
<dbReference type="HOGENOM" id="CLU_070525_2_0_9"/>
<dbReference type="GO" id="GO:0005829">
    <property type="term" value="C:cytosol"/>
    <property type="evidence" value="ECO:0007669"/>
    <property type="project" value="TreeGrafter"/>
</dbReference>
<dbReference type="GO" id="GO:0000028">
    <property type="term" value="P:ribosomal small subunit assembly"/>
    <property type="evidence" value="ECO:0007669"/>
    <property type="project" value="TreeGrafter"/>
</dbReference>
<dbReference type="GO" id="GO:0006412">
    <property type="term" value="P:translation"/>
    <property type="evidence" value="ECO:0007669"/>
    <property type="project" value="TreeGrafter"/>
</dbReference>
<dbReference type="CDD" id="cd01734">
    <property type="entry name" value="YlxS_C"/>
    <property type="match status" value="1"/>
</dbReference>
<dbReference type="Gene3D" id="2.30.30.180">
    <property type="entry name" value="Ribosome maturation factor RimP, C-terminal domain"/>
    <property type="match status" value="1"/>
</dbReference>
<dbReference type="Gene3D" id="3.30.300.70">
    <property type="entry name" value="RimP-like superfamily, N-terminal"/>
    <property type="match status" value="1"/>
</dbReference>
<dbReference type="HAMAP" id="MF_01077">
    <property type="entry name" value="RimP"/>
    <property type="match status" value="1"/>
</dbReference>
<dbReference type="InterPro" id="IPR003728">
    <property type="entry name" value="Ribosome_maturation_RimP"/>
</dbReference>
<dbReference type="InterPro" id="IPR028998">
    <property type="entry name" value="RimP_C"/>
</dbReference>
<dbReference type="InterPro" id="IPR036847">
    <property type="entry name" value="RimP_C_sf"/>
</dbReference>
<dbReference type="InterPro" id="IPR028989">
    <property type="entry name" value="RimP_N"/>
</dbReference>
<dbReference type="InterPro" id="IPR035956">
    <property type="entry name" value="RimP_N_sf"/>
</dbReference>
<dbReference type="NCBIfam" id="NF000928">
    <property type="entry name" value="PRK00092.1-2"/>
    <property type="match status" value="1"/>
</dbReference>
<dbReference type="PANTHER" id="PTHR33867">
    <property type="entry name" value="RIBOSOME MATURATION FACTOR RIMP"/>
    <property type="match status" value="1"/>
</dbReference>
<dbReference type="PANTHER" id="PTHR33867:SF1">
    <property type="entry name" value="RIBOSOME MATURATION FACTOR RIMP"/>
    <property type="match status" value="1"/>
</dbReference>
<dbReference type="Pfam" id="PF17384">
    <property type="entry name" value="DUF150_C"/>
    <property type="match status" value="1"/>
</dbReference>
<dbReference type="Pfam" id="PF02576">
    <property type="entry name" value="RimP_N"/>
    <property type="match status" value="1"/>
</dbReference>
<dbReference type="SUPFAM" id="SSF74942">
    <property type="entry name" value="YhbC-like, C-terminal domain"/>
    <property type="match status" value="1"/>
</dbReference>
<dbReference type="SUPFAM" id="SSF75420">
    <property type="entry name" value="YhbC-like, N-terminal domain"/>
    <property type="match status" value="1"/>
</dbReference>
<keyword id="KW-0963">Cytoplasm</keyword>
<keyword id="KW-0690">Ribosome biogenesis</keyword>
<feature type="chain" id="PRO_0000229282" description="Ribosome maturation factor RimP">
    <location>
        <begin position="1"/>
        <end position="178"/>
    </location>
</feature>
<protein>
    <recommendedName>
        <fullName evidence="1">Ribosome maturation factor RimP</fullName>
    </recommendedName>
</protein>
<accession>Q48RU4</accession>
<comment type="function">
    <text evidence="1">Required for maturation of 30S ribosomal subunits.</text>
</comment>
<comment type="subcellular location">
    <subcellularLocation>
        <location evidence="1">Cytoplasm</location>
    </subcellularLocation>
</comment>
<comment type="similarity">
    <text evidence="1">Belongs to the RimP family.</text>
</comment>
<sequence length="178" mass="19689">MDSQGPIILEKSIKIEEVIKIANTSIIDIVTKTVTPEIKAPYELVDVEYDKMGSDYILSILVDKEGGITVEDTSDLTNIISPLLDTIDPDPFPNQYMLEVSSPGLERPLKTADSLKAAVGSYINVSLYQAIDKVKVFQGDLLAFDGETLTIDYLDKTRHKIVNIPYQAVAKVRMAVKL</sequence>
<name>RIMP_STRPM</name>
<gene>
    <name evidence="1" type="primary">rimP</name>
    <name type="ordered locus">M28_Spy1456</name>
</gene>
<reference key="1">
    <citation type="journal article" date="2005" name="J. Infect. Dis.">
        <title>Genome sequence of a serotype M28 strain of group A Streptococcus: potential new insights into puerperal sepsis and bacterial disease specificity.</title>
        <authorList>
            <person name="Green N.M."/>
            <person name="Zhang S."/>
            <person name="Porcella S.F."/>
            <person name="Nagiec M.J."/>
            <person name="Barbian K.D."/>
            <person name="Beres S.B."/>
            <person name="Lefebvre R.B."/>
            <person name="Musser J.M."/>
        </authorList>
    </citation>
    <scope>NUCLEOTIDE SEQUENCE [LARGE SCALE GENOMIC DNA]</scope>
    <source>
        <strain>MGAS6180</strain>
    </source>
</reference>
<evidence type="ECO:0000255" key="1">
    <source>
        <dbReference type="HAMAP-Rule" id="MF_01077"/>
    </source>
</evidence>
<organism>
    <name type="scientific">Streptococcus pyogenes serotype M28 (strain MGAS6180)</name>
    <dbReference type="NCBI Taxonomy" id="319701"/>
    <lineage>
        <taxon>Bacteria</taxon>
        <taxon>Bacillati</taxon>
        <taxon>Bacillota</taxon>
        <taxon>Bacilli</taxon>
        <taxon>Lactobacillales</taxon>
        <taxon>Streptococcaceae</taxon>
        <taxon>Streptococcus</taxon>
    </lineage>
</organism>